<dbReference type="EC" id="2.3.1.37" evidence="3"/>
<dbReference type="EMBL" id="M24367">
    <property type="protein sequence ID" value="AAA20400.1"/>
    <property type="molecule type" value="mRNA"/>
</dbReference>
<dbReference type="PIR" id="A31452">
    <property type="entry name" value="SYCHLE"/>
</dbReference>
<dbReference type="SMR" id="P18080"/>
<dbReference type="FunCoup" id="P18080">
    <property type="interactions" value="82"/>
</dbReference>
<dbReference type="GlyGen" id="P18080">
    <property type="glycosylation" value="1 site"/>
</dbReference>
<dbReference type="VEuPathDB" id="HostDB:geneid_552895"/>
<dbReference type="InParanoid" id="P18080"/>
<dbReference type="PhylomeDB" id="P18080"/>
<dbReference type="Reactome" id="R-GGA-421984">
    <property type="pathway name" value="Heme synthesis"/>
</dbReference>
<dbReference type="UniPathway" id="UPA00251">
    <property type="reaction ID" value="UER00375"/>
</dbReference>
<dbReference type="Proteomes" id="UP000000539">
    <property type="component" value="Unassembled WGS sequence"/>
</dbReference>
<dbReference type="GO" id="GO:0005829">
    <property type="term" value="C:cytosol"/>
    <property type="evidence" value="ECO:0000304"/>
    <property type="project" value="Reactome"/>
</dbReference>
<dbReference type="GO" id="GO:0005743">
    <property type="term" value="C:mitochondrial inner membrane"/>
    <property type="evidence" value="ECO:0007669"/>
    <property type="project" value="UniProtKB-SubCell"/>
</dbReference>
<dbReference type="GO" id="GO:0005759">
    <property type="term" value="C:mitochondrial matrix"/>
    <property type="evidence" value="ECO:0000304"/>
    <property type="project" value="Reactome"/>
</dbReference>
<dbReference type="GO" id="GO:0005739">
    <property type="term" value="C:mitochondrion"/>
    <property type="evidence" value="ECO:0000318"/>
    <property type="project" value="GO_Central"/>
</dbReference>
<dbReference type="GO" id="GO:0003870">
    <property type="term" value="F:5-aminolevulinate synthase activity"/>
    <property type="evidence" value="ECO:0000250"/>
    <property type="project" value="UniProtKB"/>
</dbReference>
<dbReference type="GO" id="GO:0030170">
    <property type="term" value="F:pyridoxal phosphate binding"/>
    <property type="evidence" value="ECO:0007669"/>
    <property type="project" value="InterPro"/>
</dbReference>
<dbReference type="GO" id="GO:0048821">
    <property type="term" value="P:erythrocyte development"/>
    <property type="evidence" value="ECO:0000318"/>
    <property type="project" value="GO_Central"/>
</dbReference>
<dbReference type="GO" id="GO:0006783">
    <property type="term" value="P:heme biosynthetic process"/>
    <property type="evidence" value="ECO:0000318"/>
    <property type="project" value="GO_Central"/>
</dbReference>
<dbReference type="GO" id="GO:0042541">
    <property type="term" value="P:hemoglobin biosynthetic process"/>
    <property type="evidence" value="ECO:0000318"/>
    <property type="project" value="GO_Central"/>
</dbReference>
<dbReference type="GO" id="GO:0006782">
    <property type="term" value="P:protoporphyrinogen IX biosynthetic process"/>
    <property type="evidence" value="ECO:0007669"/>
    <property type="project" value="UniProtKB-UniPathway"/>
</dbReference>
<dbReference type="CDD" id="cd06454">
    <property type="entry name" value="KBL_like"/>
    <property type="match status" value="1"/>
</dbReference>
<dbReference type="FunFam" id="3.40.640.10:FF:000006">
    <property type="entry name" value="5-aminolevulinate synthase, mitochondrial"/>
    <property type="match status" value="1"/>
</dbReference>
<dbReference type="Gene3D" id="3.90.1150.10">
    <property type="entry name" value="Aspartate Aminotransferase, domain 1"/>
    <property type="match status" value="1"/>
</dbReference>
<dbReference type="Gene3D" id="3.40.640.10">
    <property type="entry name" value="Type I PLP-dependent aspartate aminotransferase-like (Major domain)"/>
    <property type="match status" value="1"/>
</dbReference>
<dbReference type="InterPro" id="IPR010961">
    <property type="entry name" value="4pyrrol_synth_NH2levulA_synth"/>
</dbReference>
<dbReference type="InterPro" id="IPR001917">
    <property type="entry name" value="Aminotrans_II_pyridoxalP_BS"/>
</dbReference>
<dbReference type="InterPro" id="IPR004839">
    <property type="entry name" value="Aminotransferase_I/II_large"/>
</dbReference>
<dbReference type="InterPro" id="IPR050087">
    <property type="entry name" value="AON_synthase_class-II"/>
</dbReference>
<dbReference type="InterPro" id="IPR015424">
    <property type="entry name" value="PyrdxlP-dep_Trfase"/>
</dbReference>
<dbReference type="InterPro" id="IPR015421">
    <property type="entry name" value="PyrdxlP-dep_Trfase_major"/>
</dbReference>
<dbReference type="InterPro" id="IPR015422">
    <property type="entry name" value="PyrdxlP-dep_Trfase_small"/>
</dbReference>
<dbReference type="NCBIfam" id="TIGR01821">
    <property type="entry name" value="5aminolev_synth"/>
    <property type="match status" value="1"/>
</dbReference>
<dbReference type="PANTHER" id="PTHR13693:SF58">
    <property type="entry name" value="5-AMINOLEVULINATE SYNTHASE, ERYTHROID-SPECIFIC, MITOCHONDRIAL"/>
    <property type="match status" value="1"/>
</dbReference>
<dbReference type="PANTHER" id="PTHR13693">
    <property type="entry name" value="CLASS II AMINOTRANSFERASE/8-AMINO-7-OXONONANOATE SYNTHASE"/>
    <property type="match status" value="1"/>
</dbReference>
<dbReference type="Pfam" id="PF00155">
    <property type="entry name" value="Aminotran_1_2"/>
    <property type="match status" value="1"/>
</dbReference>
<dbReference type="SUPFAM" id="SSF53383">
    <property type="entry name" value="PLP-dependent transferases"/>
    <property type="match status" value="1"/>
</dbReference>
<dbReference type="PROSITE" id="PS00599">
    <property type="entry name" value="AA_TRANSFER_CLASS_2"/>
    <property type="match status" value="1"/>
</dbReference>
<sequence>MAAFLRCPLLARHPPLARAFATGARCPFMGFAHRAAPELQEDVERPQIPAVEVLEELLRDGGAALNRTVRDCMDEDAFPYEEQFQAQLGALRRTHTYRVVTAVGRRADAPPLGTRGTAPHTSVELWCSSDYLGLSRHPAVLRAARAALDAHGLGAGGTRNIGGTSPLHGALERALALLHRQPRAALFSSCFAANDTALDTLARILPGCQVYSDAGNHASMIQGIRRRGVPKFIFRHNDPHHLEQLLGRSPPGVPKIVAFESLHSMDGSIAPLEELCDVAHAYGALTFVDEVHAVGLYGARGAGIAERDGVQHKVDVVSGTLGKALGAVGGYIAGSEALVDAVRSLGPGFIFTTALPPQRGGGALAALQVVGSAEGAALRRAHQRHAKHLRVLLRDRGLPALPSHIVPVRWDAEANTRLSRALLEEHGLYVQAINHPTVPRGQELLLRIAPTPHHSPPMLENLADKLSECWGAVGLPREDPPGPSCSSCHRPLHLSLLSPLERDQFGVRGAAAG</sequence>
<reference key="1">
    <citation type="journal article" date="1989" name="Proc. Natl. Acad. Sci. U.S.A.">
        <title>Expression of delta-aminolevulinate synthase in avian cells: separate genes encode erythroid-specific and nonspecific isozymes.</title>
        <authorList>
            <person name="Riddle R.D."/>
            <person name="Yamamoto M."/>
            <person name="Engel J.D."/>
        </authorList>
    </citation>
    <scope>NUCLEOTIDE SEQUENCE [MRNA]</scope>
    <scope>TISSUE SPECIFICITY</scope>
    <source>
        <tissue>Erythroid cell</tissue>
    </source>
</reference>
<feature type="transit peptide" description="Mitochondrion" evidence="4">
    <location>
        <begin position="1"/>
        <end position="18"/>
    </location>
</feature>
<feature type="chain" id="PRO_0000001226" description="5-aminolevulinate synthase, erythroid-specific, mitochondrial">
    <location>
        <begin position="19"/>
        <end position="513"/>
    </location>
</feature>
<feature type="active site" evidence="2">
    <location>
        <position position="323"/>
    </location>
</feature>
<feature type="binding site" evidence="2">
    <location>
        <position position="98"/>
    </location>
    <ligand>
        <name>succinyl-CoA</name>
        <dbReference type="ChEBI" id="CHEBI:57292"/>
    </ligand>
</feature>
<feature type="binding site" description="in other chain" evidence="3">
    <location>
        <position position="190"/>
    </location>
    <ligand>
        <name>pyridoxal 5'-phosphate</name>
        <dbReference type="ChEBI" id="CHEBI:597326"/>
        <note>ligand shared between dimeric partners</note>
    </ligand>
</feature>
<feature type="binding site" description="in other chain" evidence="3">
    <location>
        <position position="191"/>
    </location>
    <ligand>
        <name>pyridoxal 5'-phosphate</name>
        <dbReference type="ChEBI" id="CHEBI:597326"/>
        <note>ligand shared between dimeric partners</note>
    </ligand>
</feature>
<feature type="binding site" evidence="2">
    <location>
        <position position="212"/>
    </location>
    <ligand>
        <name>succinyl-CoA</name>
        <dbReference type="ChEBI" id="CHEBI:57292"/>
    </ligand>
</feature>
<feature type="binding site" evidence="2">
    <location>
        <position position="231"/>
    </location>
    <ligand>
        <name>succinyl-CoA</name>
        <dbReference type="ChEBI" id="CHEBI:57292"/>
    </ligand>
</feature>
<feature type="binding site" description="in other chain" evidence="2">
    <location>
        <position position="264"/>
    </location>
    <ligand>
        <name>pyridoxal 5'-phosphate</name>
        <dbReference type="ChEBI" id="CHEBI:597326"/>
        <note>ligand shared between dimeric partners</note>
    </ligand>
</feature>
<feature type="binding site" description="in other chain" evidence="3">
    <location>
        <position position="292"/>
    </location>
    <ligand>
        <name>pyridoxal 5'-phosphate</name>
        <dbReference type="ChEBI" id="CHEBI:597326"/>
        <note>ligand shared between dimeric partners</note>
    </ligand>
</feature>
<feature type="binding site" description="in other chain" evidence="3">
    <location>
        <position position="320"/>
    </location>
    <ligand>
        <name>pyridoxal 5'-phosphate</name>
        <dbReference type="ChEBI" id="CHEBI:597326"/>
        <note>ligand shared between dimeric partners</note>
    </ligand>
</feature>
<feature type="binding site" evidence="3">
    <location>
        <position position="352"/>
    </location>
    <ligand>
        <name>pyridoxal 5'-phosphate</name>
        <dbReference type="ChEBI" id="CHEBI:597326"/>
        <note>ligand shared between dimeric partners</note>
    </ligand>
</feature>
<feature type="binding site" evidence="3">
    <location>
        <position position="353"/>
    </location>
    <ligand>
        <name>pyridoxal 5'-phosphate</name>
        <dbReference type="ChEBI" id="CHEBI:597326"/>
        <note>ligand shared between dimeric partners</note>
    </ligand>
</feature>
<feature type="binding site" evidence="2">
    <location>
        <position position="437"/>
    </location>
    <ligand>
        <name>succinyl-CoA</name>
        <dbReference type="ChEBI" id="CHEBI:57292"/>
    </ligand>
</feature>
<feature type="modified residue" description="N6-(pyridoxal phosphate)lysine" evidence="1">
    <location>
        <position position="323"/>
    </location>
</feature>
<evidence type="ECO:0000250" key="1">
    <source>
        <dbReference type="UniProtKB" id="P08680"/>
    </source>
</evidence>
<evidence type="ECO:0000250" key="2">
    <source>
        <dbReference type="UniProtKB" id="P18079"/>
    </source>
</evidence>
<evidence type="ECO:0000250" key="3">
    <source>
        <dbReference type="UniProtKB" id="P22557"/>
    </source>
</evidence>
<evidence type="ECO:0000255" key="4"/>
<evidence type="ECO:0000269" key="5">
    <source>
    </source>
</evidence>
<evidence type="ECO:0000305" key="6"/>
<organism>
    <name type="scientific">Gallus gallus</name>
    <name type="common">Chicken</name>
    <dbReference type="NCBI Taxonomy" id="9031"/>
    <lineage>
        <taxon>Eukaryota</taxon>
        <taxon>Metazoa</taxon>
        <taxon>Chordata</taxon>
        <taxon>Craniata</taxon>
        <taxon>Vertebrata</taxon>
        <taxon>Euteleostomi</taxon>
        <taxon>Archelosauria</taxon>
        <taxon>Archosauria</taxon>
        <taxon>Dinosauria</taxon>
        <taxon>Saurischia</taxon>
        <taxon>Theropoda</taxon>
        <taxon>Coelurosauria</taxon>
        <taxon>Aves</taxon>
        <taxon>Neognathae</taxon>
        <taxon>Galloanserae</taxon>
        <taxon>Galliformes</taxon>
        <taxon>Phasianidae</taxon>
        <taxon>Phasianinae</taxon>
        <taxon>Gallus</taxon>
    </lineage>
</organism>
<comment type="function">
    <text evidence="3">Catalyzes the pyridoxal 5'-phosphate (PLP)-dependent condensation of succinyl-CoA and glycine to form aminolevulinic acid (ALA), with CoA and CO2 as by-products (By similarity). Contributes significantly to heme formation during erythropoiesis (By similarity).</text>
</comment>
<comment type="catalytic activity">
    <reaction evidence="3">
        <text>succinyl-CoA + glycine + H(+) = 5-aminolevulinate + CO2 + CoA</text>
        <dbReference type="Rhea" id="RHEA:12921"/>
        <dbReference type="ChEBI" id="CHEBI:15378"/>
        <dbReference type="ChEBI" id="CHEBI:16526"/>
        <dbReference type="ChEBI" id="CHEBI:57287"/>
        <dbReference type="ChEBI" id="CHEBI:57292"/>
        <dbReference type="ChEBI" id="CHEBI:57305"/>
        <dbReference type="ChEBI" id="CHEBI:356416"/>
        <dbReference type="EC" id="2.3.1.37"/>
    </reaction>
    <physiologicalReaction direction="left-to-right" evidence="3">
        <dbReference type="Rhea" id="RHEA:12922"/>
    </physiologicalReaction>
</comment>
<comment type="cofactor">
    <cofactor evidence="3">
        <name>pyridoxal 5'-phosphate</name>
        <dbReference type="ChEBI" id="CHEBI:597326"/>
    </cofactor>
</comment>
<comment type="pathway">
    <text evidence="3">Porphyrin-containing compound metabolism; protoporphyrin-IX biosynthesis; 5-aminolevulinate from glycine: step 1/1.</text>
</comment>
<comment type="subunit">
    <text evidence="3">Homodimer.</text>
</comment>
<comment type="subcellular location">
    <subcellularLocation>
        <location evidence="3">Mitochondrion inner membrane</location>
        <topology evidence="3">Peripheral membrane protein</topology>
    </subcellularLocation>
    <text evidence="3">Localizes to the matrix side of the mitochondrion inner membrane.</text>
</comment>
<comment type="tissue specificity">
    <text evidence="5">Erythroid-specific.</text>
</comment>
<comment type="domain">
    <text evidence="3">C-terminus is a mobile self-inhibitory loop which interferes directly with active site.</text>
</comment>
<comment type="similarity">
    <text evidence="6">Belongs to the class-II pyridoxal-phosphate-dependent aminotransferase family.</text>
</comment>
<name>HEM0_CHICK</name>
<gene>
    <name type="primary">ALAS2</name>
    <name type="synonym">ALASE</name>
</gene>
<accession>P18080</accession>
<keyword id="KW-0012">Acyltransferase</keyword>
<keyword id="KW-0350">Heme biosynthesis</keyword>
<keyword id="KW-0472">Membrane</keyword>
<keyword id="KW-0496">Mitochondrion</keyword>
<keyword id="KW-0999">Mitochondrion inner membrane</keyword>
<keyword id="KW-0663">Pyridoxal phosphate</keyword>
<keyword id="KW-1185">Reference proteome</keyword>
<keyword id="KW-0808">Transferase</keyword>
<keyword id="KW-0809">Transit peptide</keyword>
<protein>
    <recommendedName>
        <fullName>5-aminolevulinate synthase, erythroid-specific, mitochondrial</fullName>
        <shortName>ALAS-E</shortName>
        <ecNumber evidence="3">2.3.1.37</ecNumber>
    </recommendedName>
    <alternativeName>
        <fullName>5-aminolevulinic acid synthase 2</fullName>
    </alternativeName>
    <alternativeName>
        <fullName>Delta-ALA synthase 2</fullName>
    </alternativeName>
    <alternativeName>
        <fullName>Delta-aminolevulinate synthase 2</fullName>
    </alternativeName>
</protein>
<proteinExistence type="evidence at transcript level"/>